<proteinExistence type="inferred from homology"/>
<protein>
    <recommendedName>
        <fullName evidence="1">7-carboxy-7-deazaguanine synthase</fullName>
        <shortName evidence="1">CDG synthase</shortName>
        <ecNumber evidence="1">4.3.99.3</ecNumber>
    </recommendedName>
    <alternativeName>
        <fullName evidence="1">Archaeosine biosynthesis protein QueE</fullName>
    </alternativeName>
</protein>
<reference key="1">
    <citation type="journal article" date="1997" name="J. Bacteriol.">
        <title>Complete genome sequence of Methanobacterium thermoautotrophicum deltaH: functional analysis and comparative genomics.</title>
        <authorList>
            <person name="Smith D.R."/>
            <person name="Doucette-Stamm L.A."/>
            <person name="Deloughery C."/>
            <person name="Lee H.-M."/>
            <person name="Dubois J."/>
            <person name="Aldredge T."/>
            <person name="Bashirzadeh R."/>
            <person name="Blakely D."/>
            <person name="Cook R."/>
            <person name="Gilbert K."/>
            <person name="Harrison D."/>
            <person name="Hoang L."/>
            <person name="Keagle P."/>
            <person name="Lumm W."/>
            <person name="Pothier B."/>
            <person name="Qiu D."/>
            <person name="Spadafora R."/>
            <person name="Vicare R."/>
            <person name="Wang Y."/>
            <person name="Wierzbowski J."/>
            <person name="Gibson R."/>
            <person name="Jiwani N."/>
            <person name="Caruso A."/>
            <person name="Bush D."/>
            <person name="Safer H."/>
            <person name="Patwell D."/>
            <person name="Prabhakar S."/>
            <person name="McDougall S."/>
            <person name="Shimer G."/>
            <person name="Goyal A."/>
            <person name="Pietrovski S."/>
            <person name="Church G.M."/>
            <person name="Daniels C.J."/>
            <person name="Mao J.-I."/>
            <person name="Rice P."/>
            <person name="Noelling J."/>
            <person name="Reeve J.N."/>
        </authorList>
    </citation>
    <scope>NUCLEOTIDE SEQUENCE [LARGE SCALE GENOMIC DNA]</scope>
    <source>
        <strain>ATCC 29096 / DSM 1053 / JCM 10044 / NBRC 100330 / Delta H</strain>
    </source>
</reference>
<sequence>MILMRAPIVEVFSSIQGEGLLVGRRQIFVRFAGCNLNCSYCDTPESRDPSAGRLFTAPELTEIIEGLITPDFHSISITGGEPLLYPDFITELLEESPHRTLLETNGSLPSNAERIAHLFDYASVDIKIAEHFSDNLRSGTTESDISSPGDLIDREIQVINILISRGVNTYCKVVVMPTTGAGYIGALAERLLECVDEPERLPLVIQPCSPPEQWAQNTPRLLEMSQEAGKYMDVYVIPQMHRALGLR</sequence>
<feature type="chain" id="PRO_0000416217" description="7-carboxy-7-deazaguanine synthase">
    <location>
        <begin position="1"/>
        <end position="247"/>
    </location>
</feature>
<feature type="domain" description="Radical SAM core" evidence="2">
    <location>
        <begin position="21"/>
        <end position="247"/>
    </location>
</feature>
<feature type="binding site" evidence="1">
    <location>
        <begin position="15"/>
        <end position="17"/>
    </location>
    <ligand>
        <name>substrate</name>
    </ligand>
</feature>
<feature type="binding site" evidence="1">
    <location>
        <position position="30"/>
    </location>
    <ligand>
        <name>substrate</name>
    </ligand>
</feature>
<feature type="binding site" evidence="1">
    <location>
        <position position="34"/>
    </location>
    <ligand>
        <name>[4Fe-4S] cluster</name>
        <dbReference type="ChEBI" id="CHEBI:49883"/>
        <note>4Fe-4S-S-AdoMet</note>
    </ligand>
</feature>
<feature type="binding site" evidence="1">
    <location>
        <position position="38"/>
    </location>
    <ligand>
        <name>[4Fe-4S] cluster</name>
        <dbReference type="ChEBI" id="CHEBI:49883"/>
        <note>4Fe-4S-S-AdoMet</note>
    </ligand>
</feature>
<feature type="binding site" evidence="1">
    <location>
        <position position="41"/>
    </location>
    <ligand>
        <name>[4Fe-4S] cluster</name>
        <dbReference type="ChEBI" id="CHEBI:49883"/>
        <note>4Fe-4S-S-AdoMet</note>
    </ligand>
</feature>
<feature type="binding site" evidence="1">
    <location>
        <position position="43"/>
    </location>
    <ligand>
        <name>Mg(2+)</name>
        <dbReference type="ChEBI" id="CHEBI:18420"/>
    </ligand>
</feature>
<feature type="binding site" evidence="1">
    <location>
        <position position="78"/>
    </location>
    <ligand>
        <name>substrate</name>
    </ligand>
</feature>
<feature type="binding site" evidence="1">
    <location>
        <position position="80"/>
    </location>
    <ligand>
        <name>S-adenosyl-L-methionine</name>
        <dbReference type="ChEBI" id="CHEBI:59789"/>
    </ligand>
</feature>
<evidence type="ECO:0000255" key="1">
    <source>
        <dbReference type="HAMAP-Rule" id="MF_00917"/>
    </source>
</evidence>
<evidence type="ECO:0000255" key="2">
    <source>
        <dbReference type="PROSITE-ProRule" id="PRU01266"/>
    </source>
</evidence>
<gene>
    <name evidence="1" type="primary">queE</name>
    <name type="ordered locus">MTH_1227</name>
</gene>
<comment type="function">
    <text evidence="1">Catalyzes the complex heterocyclic radical-mediated conversion of 6-carboxy-5,6,7,8-tetrahydropterin (CPH4) to 7-carboxy-7-deazaguanine (CDG), a step common to the biosynthetic pathways of all 7-deazapurine-containing compounds.</text>
</comment>
<comment type="catalytic activity">
    <reaction evidence="1">
        <text>6-carboxy-5,6,7,8-tetrahydropterin + H(+) = 7-carboxy-7-deazaguanine + NH4(+)</text>
        <dbReference type="Rhea" id="RHEA:27974"/>
        <dbReference type="ChEBI" id="CHEBI:15378"/>
        <dbReference type="ChEBI" id="CHEBI:28938"/>
        <dbReference type="ChEBI" id="CHEBI:61032"/>
        <dbReference type="ChEBI" id="CHEBI:61036"/>
        <dbReference type="EC" id="4.3.99.3"/>
    </reaction>
</comment>
<comment type="cofactor">
    <cofactor evidence="1">
        <name>[4Fe-4S] cluster</name>
        <dbReference type="ChEBI" id="CHEBI:49883"/>
    </cofactor>
    <text evidence="1">Binds 1 [4Fe-4S] cluster. The cluster is coordinated with 3 cysteines and an exchangeable S-adenosyl-L-methionine.</text>
</comment>
<comment type="cofactor">
    <cofactor evidence="1">
        <name>S-adenosyl-L-methionine</name>
        <dbReference type="ChEBI" id="CHEBI:59789"/>
    </cofactor>
    <text evidence="1">Binds 1 S-adenosyl-L-methionine per subunit.</text>
</comment>
<comment type="cofactor">
    <cofactor evidence="1">
        <name>Mg(2+)</name>
        <dbReference type="ChEBI" id="CHEBI:18420"/>
    </cofactor>
</comment>
<comment type="pathway">
    <text evidence="1">Purine metabolism; 7-cyano-7-deazaguanine biosynthesis.</text>
</comment>
<comment type="subunit">
    <text evidence="1">Homodimer.</text>
</comment>
<comment type="similarity">
    <text evidence="1">Belongs to the radical SAM superfamily. 7-carboxy-7-deazaguanine synthase family.</text>
</comment>
<accession>O27295</accession>
<keyword id="KW-0004">4Fe-4S</keyword>
<keyword id="KW-0408">Iron</keyword>
<keyword id="KW-0411">Iron-sulfur</keyword>
<keyword id="KW-0456">Lyase</keyword>
<keyword id="KW-0460">Magnesium</keyword>
<keyword id="KW-0479">Metal-binding</keyword>
<keyword id="KW-1185">Reference proteome</keyword>
<keyword id="KW-0949">S-adenosyl-L-methionine</keyword>
<organism>
    <name type="scientific">Methanothermobacter thermautotrophicus (strain ATCC 29096 / DSM 1053 / JCM 10044 / NBRC 100330 / Delta H)</name>
    <name type="common">Methanobacterium thermoautotrophicum</name>
    <dbReference type="NCBI Taxonomy" id="187420"/>
    <lineage>
        <taxon>Archaea</taxon>
        <taxon>Methanobacteriati</taxon>
        <taxon>Methanobacteriota</taxon>
        <taxon>Methanomada group</taxon>
        <taxon>Methanobacteria</taxon>
        <taxon>Methanobacteriales</taxon>
        <taxon>Methanobacteriaceae</taxon>
        <taxon>Methanothermobacter</taxon>
    </lineage>
</organism>
<name>QUEE_METTH</name>
<dbReference type="EC" id="4.3.99.3" evidence="1"/>
<dbReference type="EMBL" id="AE000666">
    <property type="protein sequence ID" value="AAB85716.1"/>
    <property type="molecule type" value="Genomic_DNA"/>
</dbReference>
<dbReference type="PIR" id="H69030">
    <property type="entry name" value="H69030"/>
</dbReference>
<dbReference type="SMR" id="O27295"/>
<dbReference type="FunCoup" id="O27295">
    <property type="interactions" value="1"/>
</dbReference>
<dbReference type="STRING" id="187420.MTH_1227"/>
<dbReference type="PaxDb" id="187420-MTH_1227"/>
<dbReference type="EnsemblBacteria" id="AAB85716">
    <property type="protein sequence ID" value="AAB85716"/>
    <property type="gene ID" value="MTH_1227"/>
</dbReference>
<dbReference type="KEGG" id="mth:MTH_1227"/>
<dbReference type="PATRIC" id="fig|187420.15.peg.1205"/>
<dbReference type="HOGENOM" id="CLU_066739_1_0_2"/>
<dbReference type="InParanoid" id="O27295"/>
<dbReference type="UniPathway" id="UPA00391"/>
<dbReference type="Proteomes" id="UP000005223">
    <property type="component" value="Chromosome"/>
</dbReference>
<dbReference type="GO" id="GO:0051539">
    <property type="term" value="F:4 iron, 4 sulfur cluster binding"/>
    <property type="evidence" value="ECO:0007669"/>
    <property type="project" value="UniProtKB-UniRule"/>
</dbReference>
<dbReference type="GO" id="GO:0016840">
    <property type="term" value="F:carbon-nitrogen lyase activity"/>
    <property type="evidence" value="ECO:0007669"/>
    <property type="project" value="UniProtKB-UniRule"/>
</dbReference>
<dbReference type="GO" id="GO:0000287">
    <property type="term" value="F:magnesium ion binding"/>
    <property type="evidence" value="ECO:0007669"/>
    <property type="project" value="UniProtKB-UniRule"/>
</dbReference>
<dbReference type="GO" id="GO:1904047">
    <property type="term" value="F:S-adenosyl-L-methionine binding"/>
    <property type="evidence" value="ECO:0007669"/>
    <property type="project" value="UniProtKB-UniRule"/>
</dbReference>
<dbReference type="CDD" id="cd01335">
    <property type="entry name" value="Radical_SAM"/>
    <property type="match status" value="1"/>
</dbReference>
<dbReference type="Gene3D" id="3.20.20.70">
    <property type="entry name" value="Aldolase class I"/>
    <property type="match status" value="1"/>
</dbReference>
<dbReference type="HAMAP" id="MF_00917">
    <property type="entry name" value="QueE"/>
    <property type="match status" value="1"/>
</dbReference>
<dbReference type="InterPro" id="IPR024924">
    <property type="entry name" value="7-CO-7-deazaguanine_synth-like"/>
</dbReference>
<dbReference type="InterPro" id="IPR013785">
    <property type="entry name" value="Aldolase_TIM"/>
</dbReference>
<dbReference type="InterPro" id="IPR007197">
    <property type="entry name" value="rSAM"/>
</dbReference>
<dbReference type="PANTHER" id="PTHR42836">
    <property type="entry name" value="7-CARBOXY-7-DEAZAGUANINE SYNTHASE"/>
    <property type="match status" value="1"/>
</dbReference>
<dbReference type="PANTHER" id="PTHR42836:SF1">
    <property type="entry name" value="7-CARBOXY-7-DEAZAGUANINE SYNTHASE"/>
    <property type="match status" value="1"/>
</dbReference>
<dbReference type="Pfam" id="PF13353">
    <property type="entry name" value="Fer4_12"/>
    <property type="match status" value="1"/>
</dbReference>
<dbReference type="Pfam" id="PF04055">
    <property type="entry name" value="Radical_SAM"/>
    <property type="match status" value="1"/>
</dbReference>
<dbReference type="PIRSF" id="PIRSF000370">
    <property type="entry name" value="QueE"/>
    <property type="match status" value="1"/>
</dbReference>
<dbReference type="SFLD" id="SFLDS00029">
    <property type="entry name" value="Radical_SAM"/>
    <property type="match status" value="1"/>
</dbReference>
<dbReference type="SUPFAM" id="SSF102114">
    <property type="entry name" value="Radical SAM enzymes"/>
    <property type="match status" value="1"/>
</dbReference>
<dbReference type="PROSITE" id="PS51918">
    <property type="entry name" value="RADICAL_SAM"/>
    <property type="match status" value="1"/>
</dbReference>